<accession>Q1LQD9</accession>
<organism>
    <name type="scientific">Cupriavidus metallidurans (strain ATCC 43123 / DSM 2839 / NBRC 102507 / CH34)</name>
    <name type="common">Ralstonia metallidurans</name>
    <dbReference type="NCBI Taxonomy" id="266264"/>
    <lineage>
        <taxon>Bacteria</taxon>
        <taxon>Pseudomonadati</taxon>
        <taxon>Pseudomonadota</taxon>
        <taxon>Betaproteobacteria</taxon>
        <taxon>Burkholderiales</taxon>
        <taxon>Burkholderiaceae</taxon>
        <taxon>Cupriavidus</taxon>
    </lineage>
</organism>
<reference key="1">
    <citation type="journal article" date="2010" name="PLoS ONE">
        <title>The complete genome sequence of Cupriavidus metallidurans strain CH34, a master survivalist in harsh and anthropogenic environments.</title>
        <authorList>
            <person name="Janssen P.J."/>
            <person name="Van Houdt R."/>
            <person name="Moors H."/>
            <person name="Monsieurs P."/>
            <person name="Morin N."/>
            <person name="Michaux A."/>
            <person name="Benotmane M.A."/>
            <person name="Leys N."/>
            <person name="Vallaeys T."/>
            <person name="Lapidus A."/>
            <person name="Monchy S."/>
            <person name="Medigue C."/>
            <person name="Taghavi S."/>
            <person name="McCorkle S."/>
            <person name="Dunn J."/>
            <person name="van der Lelie D."/>
            <person name="Mergeay M."/>
        </authorList>
    </citation>
    <scope>NUCLEOTIDE SEQUENCE [LARGE SCALE GENOMIC DNA]</scope>
    <source>
        <strain>ATCC 43123 / DSM 2839 / NBRC 102507 / CH34</strain>
    </source>
</reference>
<keyword id="KW-1185">Reference proteome</keyword>
<keyword id="KW-0687">Ribonucleoprotein</keyword>
<keyword id="KW-0689">Ribosomal protein</keyword>
<protein>
    <recommendedName>
        <fullName evidence="1">Large ribosomal subunit protein bL19</fullName>
    </recommendedName>
    <alternativeName>
        <fullName evidence="2">50S ribosomal protein L19</fullName>
    </alternativeName>
</protein>
<dbReference type="EMBL" id="CP000352">
    <property type="protein sequence ID" value="ABF07637.1"/>
    <property type="molecule type" value="Genomic_DNA"/>
</dbReference>
<dbReference type="RefSeq" id="WP_008643705.1">
    <property type="nucleotide sequence ID" value="NC_007973.1"/>
</dbReference>
<dbReference type="SMR" id="Q1LQD9"/>
<dbReference type="STRING" id="266264.Rmet_0751"/>
<dbReference type="GeneID" id="60825237"/>
<dbReference type="KEGG" id="rme:Rmet_0751"/>
<dbReference type="eggNOG" id="COG0335">
    <property type="taxonomic scope" value="Bacteria"/>
</dbReference>
<dbReference type="HOGENOM" id="CLU_103507_1_0_4"/>
<dbReference type="Proteomes" id="UP000002429">
    <property type="component" value="Chromosome"/>
</dbReference>
<dbReference type="GO" id="GO:0022625">
    <property type="term" value="C:cytosolic large ribosomal subunit"/>
    <property type="evidence" value="ECO:0007669"/>
    <property type="project" value="TreeGrafter"/>
</dbReference>
<dbReference type="GO" id="GO:0003735">
    <property type="term" value="F:structural constituent of ribosome"/>
    <property type="evidence" value="ECO:0007669"/>
    <property type="project" value="InterPro"/>
</dbReference>
<dbReference type="GO" id="GO:0006412">
    <property type="term" value="P:translation"/>
    <property type="evidence" value="ECO:0007669"/>
    <property type="project" value="UniProtKB-UniRule"/>
</dbReference>
<dbReference type="FunFam" id="2.30.30.790:FF:000001">
    <property type="entry name" value="50S ribosomal protein L19"/>
    <property type="match status" value="1"/>
</dbReference>
<dbReference type="Gene3D" id="2.30.30.790">
    <property type="match status" value="1"/>
</dbReference>
<dbReference type="HAMAP" id="MF_00402">
    <property type="entry name" value="Ribosomal_bL19"/>
    <property type="match status" value="1"/>
</dbReference>
<dbReference type="InterPro" id="IPR001857">
    <property type="entry name" value="Ribosomal_bL19"/>
</dbReference>
<dbReference type="InterPro" id="IPR018257">
    <property type="entry name" value="Ribosomal_bL19_CS"/>
</dbReference>
<dbReference type="InterPro" id="IPR038657">
    <property type="entry name" value="Ribosomal_bL19_sf"/>
</dbReference>
<dbReference type="InterPro" id="IPR008991">
    <property type="entry name" value="Translation_prot_SH3-like_sf"/>
</dbReference>
<dbReference type="NCBIfam" id="TIGR01024">
    <property type="entry name" value="rplS_bact"/>
    <property type="match status" value="1"/>
</dbReference>
<dbReference type="PANTHER" id="PTHR15680:SF9">
    <property type="entry name" value="LARGE RIBOSOMAL SUBUNIT PROTEIN BL19M"/>
    <property type="match status" value="1"/>
</dbReference>
<dbReference type="PANTHER" id="PTHR15680">
    <property type="entry name" value="RIBOSOMAL PROTEIN L19"/>
    <property type="match status" value="1"/>
</dbReference>
<dbReference type="Pfam" id="PF01245">
    <property type="entry name" value="Ribosomal_L19"/>
    <property type="match status" value="1"/>
</dbReference>
<dbReference type="PIRSF" id="PIRSF002191">
    <property type="entry name" value="Ribosomal_L19"/>
    <property type="match status" value="1"/>
</dbReference>
<dbReference type="PRINTS" id="PR00061">
    <property type="entry name" value="RIBOSOMALL19"/>
</dbReference>
<dbReference type="SUPFAM" id="SSF50104">
    <property type="entry name" value="Translation proteins SH3-like domain"/>
    <property type="match status" value="1"/>
</dbReference>
<dbReference type="PROSITE" id="PS01015">
    <property type="entry name" value="RIBOSOMAL_L19"/>
    <property type="match status" value="1"/>
</dbReference>
<sequence>MNIIEQIEKEEIARLTANKTIPAFAPGDTVIVNVNVVEGNRKRVQAYEGVVIAKRNRGLNSSFIVRKISSGEGVERTFQLYSPLIAGIEVKRRGDVRRAKLYYLRERSGKSARIKEKLVMKAKPAAVAAE</sequence>
<feature type="chain" id="PRO_0000252530" description="Large ribosomal subunit protein bL19">
    <location>
        <begin position="1"/>
        <end position="130"/>
    </location>
</feature>
<gene>
    <name evidence="1" type="primary">rplS</name>
    <name type="ordered locus">Rmet_0751</name>
</gene>
<comment type="function">
    <text evidence="1">This protein is located at the 30S-50S ribosomal subunit interface and may play a role in the structure and function of the aminoacyl-tRNA binding site.</text>
</comment>
<comment type="similarity">
    <text evidence="1">Belongs to the bacterial ribosomal protein bL19 family.</text>
</comment>
<name>RL19_CUPMC</name>
<evidence type="ECO:0000255" key="1">
    <source>
        <dbReference type="HAMAP-Rule" id="MF_00402"/>
    </source>
</evidence>
<evidence type="ECO:0000305" key="2"/>
<proteinExistence type="inferred from homology"/>